<reference key="1">
    <citation type="journal article" date="2008" name="BMC Genomics">
        <title>Genomics of an extreme psychrophile, Psychromonas ingrahamii.</title>
        <authorList>
            <person name="Riley M."/>
            <person name="Staley J.T."/>
            <person name="Danchin A."/>
            <person name="Wang T.Z."/>
            <person name="Brettin T.S."/>
            <person name="Hauser L.J."/>
            <person name="Land M.L."/>
            <person name="Thompson L.S."/>
        </authorList>
    </citation>
    <scope>NUCLEOTIDE SEQUENCE [LARGE SCALE GENOMIC DNA]</scope>
    <source>
        <strain>DSM 17664 / CCUG 51855 / 37</strain>
    </source>
</reference>
<protein>
    <recommendedName>
        <fullName evidence="1">UPF0303 protein Ping_1243</fullName>
    </recommendedName>
</protein>
<accession>A1SUA8</accession>
<keyword id="KW-1185">Reference proteome</keyword>
<sequence length="159" mass="18146">MNEEYSLQDLLGQESELQFAFFNNQTAWKLGCQLKKIAEDNSTLVAIEVYAFSQTLFSYAMSGTQLDNQIWIKRKRQTVLRFGHSSYYIGQYNKAKNREFEQQVHINADDYCAHGGAFPIRIKKCGLVGVVTVSGLPQREDHQMVIDALTDLIKSVQKS</sequence>
<gene>
    <name type="ordered locus">Ping_1243</name>
</gene>
<feature type="chain" id="PRO_1000046750" description="UPF0303 protein Ping_1243">
    <location>
        <begin position="1"/>
        <end position="159"/>
    </location>
</feature>
<comment type="similarity">
    <text evidence="1">Belongs to the UPF0303 family.</text>
</comment>
<name>Y1243_PSYIN</name>
<organism>
    <name type="scientific">Psychromonas ingrahamii (strain DSM 17664 / CCUG 51855 / 37)</name>
    <dbReference type="NCBI Taxonomy" id="357804"/>
    <lineage>
        <taxon>Bacteria</taxon>
        <taxon>Pseudomonadati</taxon>
        <taxon>Pseudomonadota</taxon>
        <taxon>Gammaproteobacteria</taxon>
        <taxon>Alteromonadales</taxon>
        <taxon>Psychromonadaceae</taxon>
        <taxon>Psychromonas</taxon>
    </lineage>
</organism>
<dbReference type="EMBL" id="CP000510">
    <property type="protein sequence ID" value="ABM03073.1"/>
    <property type="molecule type" value="Genomic_DNA"/>
</dbReference>
<dbReference type="RefSeq" id="WP_011769636.1">
    <property type="nucleotide sequence ID" value="NC_008709.1"/>
</dbReference>
<dbReference type="SMR" id="A1SUA8"/>
<dbReference type="STRING" id="357804.Ping_1243"/>
<dbReference type="KEGG" id="pin:Ping_1243"/>
<dbReference type="eggNOG" id="COG4702">
    <property type="taxonomic scope" value="Bacteria"/>
</dbReference>
<dbReference type="HOGENOM" id="CLU_101036_2_1_6"/>
<dbReference type="OrthoDB" id="9815315at2"/>
<dbReference type="Proteomes" id="UP000000639">
    <property type="component" value="Chromosome"/>
</dbReference>
<dbReference type="Gene3D" id="3.30.450.150">
    <property type="entry name" value="Haem-degrading domain"/>
    <property type="match status" value="1"/>
</dbReference>
<dbReference type="HAMAP" id="MF_00761">
    <property type="entry name" value="UPF0303"/>
    <property type="match status" value="1"/>
</dbReference>
<dbReference type="InterPro" id="IPR005624">
    <property type="entry name" value="PduO/GlcC-like"/>
</dbReference>
<dbReference type="InterPro" id="IPR038084">
    <property type="entry name" value="PduO/GlcC-like_sf"/>
</dbReference>
<dbReference type="InterPro" id="IPR010371">
    <property type="entry name" value="YBR137W-like"/>
</dbReference>
<dbReference type="NCBIfam" id="NF002696">
    <property type="entry name" value="PRK02487.1-5"/>
    <property type="match status" value="1"/>
</dbReference>
<dbReference type="PANTHER" id="PTHR28255">
    <property type="match status" value="1"/>
</dbReference>
<dbReference type="PANTHER" id="PTHR28255:SF1">
    <property type="entry name" value="UPF0303 PROTEIN YBR137W"/>
    <property type="match status" value="1"/>
</dbReference>
<dbReference type="Pfam" id="PF03928">
    <property type="entry name" value="HbpS-like"/>
    <property type="match status" value="1"/>
</dbReference>
<dbReference type="PIRSF" id="PIRSF008757">
    <property type="entry name" value="UCP008757"/>
    <property type="match status" value="1"/>
</dbReference>
<dbReference type="SUPFAM" id="SSF143744">
    <property type="entry name" value="GlcG-like"/>
    <property type="match status" value="1"/>
</dbReference>
<proteinExistence type="inferred from homology"/>
<evidence type="ECO:0000255" key="1">
    <source>
        <dbReference type="HAMAP-Rule" id="MF_00761"/>
    </source>
</evidence>